<gene>
    <name evidence="1" type="primary">fabA</name>
    <name type="ordered locus">XOO0762</name>
</gene>
<keyword id="KW-0963">Cytoplasm</keyword>
<keyword id="KW-0275">Fatty acid biosynthesis</keyword>
<keyword id="KW-0276">Fatty acid metabolism</keyword>
<keyword id="KW-0413">Isomerase</keyword>
<keyword id="KW-0444">Lipid biosynthesis</keyword>
<keyword id="KW-0443">Lipid metabolism</keyword>
<keyword id="KW-0456">Lyase</keyword>
<keyword id="KW-1185">Reference proteome</keyword>
<dbReference type="EC" id="4.2.1.59" evidence="1"/>
<dbReference type="EC" id="5.3.3.14" evidence="1"/>
<dbReference type="EMBL" id="AE013598">
    <property type="protein sequence ID" value="AAW74016.1"/>
    <property type="status" value="ALT_INIT"/>
    <property type="molecule type" value="Genomic_DNA"/>
</dbReference>
<dbReference type="SMR" id="Q5H4V4"/>
<dbReference type="STRING" id="291331.XOO0762"/>
<dbReference type="KEGG" id="xoo:XOO0762"/>
<dbReference type="HOGENOM" id="CLU_097925_0_0_6"/>
<dbReference type="UniPathway" id="UPA00094"/>
<dbReference type="Proteomes" id="UP000006735">
    <property type="component" value="Chromosome"/>
</dbReference>
<dbReference type="GO" id="GO:0005737">
    <property type="term" value="C:cytoplasm"/>
    <property type="evidence" value="ECO:0007669"/>
    <property type="project" value="UniProtKB-SubCell"/>
</dbReference>
<dbReference type="GO" id="GO:0019171">
    <property type="term" value="F:(3R)-hydroxyacyl-[acyl-carrier-protein] dehydratase activity"/>
    <property type="evidence" value="ECO:0007669"/>
    <property type="project" value="UniProtKB-UniRule"/>
</dbReference>
<dbReference type="GO" id="GO:0034017">
    <property type="term" value="F:trans-2-decenoyl-acyl-carrier-protein isomerase activity"/>
    <property type="evidence" value="ECO:0007669"/>
    <property type="project" value="UniProtKB-UniRule"/>
</dbReference>
<dbReference type="GO" id="GO:0006636">
    <property type="term" value="P:unsaturated fatty acid biosynthetic process"/>
    <property type="evidence" value="ECO:0007669"/>
    <property type="project" value="UniProtKB-UniRule"/>
</dbReference>
<dbReference type="CDD" id="cd01287">
    <property type="entry name" value="FabA"/>
    <property type="match status" value="1"/>
</dbReference>
<dbReference type="Gene3D" id="3.10.129.10">
    <property type="entry name" value="Hotdog Thioesterase"/>
    <property type="match status" value="1"/>
</dbReference>
<dbReference type="HAMAP" id="MF_00405">
    <property type="entry name" value="FabA"/>
    <property type="match status" value="1"/>
</dbReference>
<dbReference type="InterPro" id="IPR010083">
    <property type="entry name" value="FabA"/>
</dbReference>
<dbReference type="InterPro" id="IPR013114">
    <property type="entry name" value="FabA_FabZ"/>
</dbReference>
<dbReference type="InterPro" id="IPR029069">
    <property type="entry name" value="HotDog_dom_sf"/>
</dbReference>
<dbReference type="NCBIfam" id="TIGR01749">
    <property type="entry name" value="fabA"/>
    <property type="match status" value="1"/>
</dbReference>
<dbReference type="NCBIfam" id="NF003509">
    <property type="entry name" value="PRK05174.1"/>
    <property type="match status" value="1"/>
</dbReference>
<dbReference type="PANTHER" id="PTHR30272">
    <property type="entry name" value="3-HYDROXYACYL-[ACYL-CARRIER-PROTEIN] DEHYDRATASE"/>
    <property type="match status" value="1"/>
</dbReference>
<dbReference type="PANTHER" id="PTHR30272:SF8">
    <property type="entry name" value="3-HYDROXYDECANOYL-[ACYL-CARRIER-PROTEIN] DEHYDRATASE"/>
    <property type="match status" value="1"/>
</dbReference>
<dbReference type="Pfam" id="PF07977">
    <property type="entry name" value="FabA"/>
    <property type="match status" value="1"/>
</dbReference>
<dbReference type="SUPFAM" id="SSF54637">
    <property type="entry name" value="Thioesterase/thiol ester dehydrase-isomerase"/>
    <property type="match status" value="1"/>
</dbReference>
<feature type="chain" id="PRO_0000267762" description="3-hydroxydecanoyl-[acyl-carrier-protein] dehydratase">
    <location>
        <begin position="1"/>
        <end position="171"/>
    </location>
</feature>
<feature type="active site" evidence="1">
    <location>
        <position position="70"/>
    </location>
</feature>
<evidence type="ECO:0000255" key="1">
    <source>
        <dbReference type="HAMAP-Rule" id="MF_00405"/>
    </source>
</evidence>
<evidence type="ECO:0000305" key="2"/>
<sequence length="171" mass="18993">MTRQSAYSRDQLLASARGELFAPDSGRLPNDPMLMFDRITEISDTGGAHGKGVIRAELDIRPDLWFFGCHFIGDPVMPGCLGLDAMWQLTGFFLTWIGAQGRGRALGCGEVKFTGQVLPSAQLVRYEIDVSRVINRKLVMAQTDARMLVDGREIYVAKDLRVGMFTSTENF</sequence>
<organism>
    <name type="scientific">Xanthomonas oryzae pv. oryzae (strain KACC10331 / KXO85)</name>
    <dbReference type="NCBI Taxonomy" id="291331"/>
    <lineage>
        <taxon>Bacteria</taxon>
        <taxon>Pseudomonadati</taxon>
        <taxon>Pseudomonadota</taxon>
        <taxon>Gammaproteobacteria</taxon>
        <taxon>Lysobacterales</taxon>
        <taxon>Lysobacteraceae</taxon>
        <taxon>Xanthomonas</taxon>
    </lineage>
</organism>
<accession>Q5H4V4</accession>
<reference key="1">
    <citation type="journal article" date="2005" name="Nucleic Acids Res.">
        <title>The genome sequence of Xanthomonas oryzae pathovar oryzae KACC10331, the bacterial blight pathogen of rice.</title>
        <authorList>
            <person name="Lee B.-M."/>
            <person name="Park Y.-J."/>
            <person name="Park D.-S."/>
            <person name="Kang H.-W."/>
            <person name="Kim J.-G."/>
            <person name="Song E.-S."/>
            <person name="Park I.-C."/>
            <person name="Yoon U.-H."/>
            <person name="Hahn J.-H."/>
            <person name="Koo B.-S."/>
            <person name="Lee G.-B."/>
            <person name="Kim H."/>
            <person name="Park H.-S."/>
            <person name="Yoon K.-O."/>
            <person name="Kim J.-H."/>
            <person name="Jung C.-H."/>
            <person name="Koh N.-H."/>
            <person name="Seo J.-S."/>
            <person name="Go S.-J."/>
        </authorList>
    </citation>
    <scope>NUCLEOTIDE SEQUENCE [LARGE SCALE GENOMIC DNA]</scope>
    <source>
        <strain>KACC10331 / KXO85</strain>
    </source>
</reference>
<proteinExistence type="inferred from homology"/>
<comment type="function">
    <text evidence="1">Necessary for the introduction of cis unsaturation into fatty acids. Catalyzes the dehydration of (3R)-3-hydroxydecanoyl-ACP to E-(2)-decenoyl-ACP and then its isomerization to Z-(3)-decenoyl-ACP. Can catalyze the dehydratase reaction for beta-hydroxyacyl-ACPs with saturated chain lengths up to 16:0, being most active on intermediate chain length.</text>
</comment>
<comment type="catalytic activity">
    <reaction evidence="1">
        <text>a (3R)-hydroxyacyl-[ACP] = a (2E)-enoyl-[ACP] + H2O</text>
        <dbReference type="Rhea" id="RHEA:13097"/>
        <dbReference type="Rhea" id="RHEA-COMP:9925"/>
        <dbReference type="Rhea" id="RHEA-COMP:9945"/>
        <dbReference type="ChEBI" id="CHEBI:15377"/>
        <dbReference type="ChEBI" id="CHEBI:78784"/>
        <dbReference type="ChEBI" id="CHEBI:78827"/>
        <dbReference type="EC" id="4.2.1.59"/>
    </reaction>
</comment>
<comment type="catalytic activity">
    <reaction evidence="1">
        <text>(3R)-hydroxydecanoyl-[ACP] = (2E)-decenoyl-[ACP] + H2O</text>
        <dbReference type="Rhea" id="RHEA:41860"/>
        <dbReference type="Rhea" id="RHEA-COMP:9638"/>
        <dbReference type="Rhea" id="RHEA-COMP:9639"/>
        <dbReference type="ChEBI" id="CHEBI:15377"/>
        <dbReference type="ChEBI" id="CHEBI:78466"/>
        <dbReference type="ChEBI" id="CHEBI:78467"/>
    </reaction>
</comment>
<comment type="catalytic activity">
    <reaction evidence="1">
        <text>(2E)-decenoyl-[ACP] = (3Z)-decenoyl-[ACP]</text>
        <dbReference type="Rhea" id="RHEA:23568"/>
        <dbReference type="Rhea" id="RHEA-COMP:9639"/>
        <dbReference type="Rhea" id="RHEA-COMP:9927"/>
        <dbReference type="ChEBI" id="CHEBI:78467"/>
        <dbReference type="ChEBI" id="CHEBI:78798"/>
        <dbReference type="EC" id="5.3.3.14"/>
    </reaction>
</comment>
<comment type="pathway">
    <text evidence="1">Lipid metabolism; fatty acid biosynthesis.</text>
</comment>
<comment type="subunit">
    <text evidence="1">Homodimer.</text>
</comment>
<comment type="subcellular location">
    <subcellularLocation>
        <location evidence="1">Cytoplasm</location>
    </subcellularLocation>
</comment>
<comment type="similarity">
    <text evidence="1">Belongs to the thioester dehydratase family. FabA subfamily.</text>
</comment>
<comment type="sequence caution" evidence="2">
    <conflict type="erroneous initiation">
        <sequence resource="EMBL-CDS" id="AAW74016"/>
    </conflict>
</comment>
<protein>
    <recommendedName>
        <fullName evidence="1">3-hydroxydecanoyl-[acyl-carrier-protein] dehydratase</fullName>
        <ecNumber evidence="1">4.2.1.59</ecNumber>
    </recommendedName>
    <alternativeName>
        <fullName evidence="1">3-hydroxyacyl-[acyl-carrier-protein] dehydratase FabA</fullName>
    </alternativeName>
    <alternativeName>
        <fullName evidence="1">Beta-hydroxydecanoyl thioester dehydrase</fullName>
    </alternativeName>
    <alternativeName>
        <fullName evidence="1">Trans-2-decenoyl-[acyl-carrier-protein] isomerase</fullName>
        <ecNumber evidence="1">5.3.3.14</ecNumber>
    </alternativeName>
</protein>
<name>FABA_XANOR</name>